<evidence type="ECO:0000255" key="1">
    <source>
        <dbReference type="HAMAP-Rule" id="MF_01595"/>
    </source>
</evidence>
<gene>
    <name evidence="1" type="primary">pnp</name>
    <name type="ordered locus">RBAM_016530</name>
</gene>
<keyword id="KW-0963">Cytoplasm</keyword>
<keyword id="KW-0460">Magnesium</keyword>
<keyword id="KW-0479">Metal-binding</keyword>
<keyword id="KW-0548">Nucleotidyltransferase</keyword>
<keyword id="KW-0694">RNA-binding</keyword>
<keyword id="KW-0808">Transferase</keyword>
<feature type="chain" id="PRO_0000329510" description="Polyribonucleotide nucleotidyltransferase">
    <location>
        <begin position="1"/>
        <end position="707"/>
    </location>
</feature>
<feature type="domain" description="KH" evidence="1">
    <location>
        <begin position="554"/>
        <end position="613"/>
    </location>
</feature>
<feature type="domain" description="S1 motif" evidence="1">
    <location>
        <begin position="623"/>
        <end position="691"/>
    </location>
</feature>
<feature type="binding site" evidence="1">
    <location>
        <position position="487"/>
    </location>
    <ligand>
        <name>Mg(2+)</name>
        <dbReference type="ChEBI" id="CHEBI:18420"/>
    </ligand>
</feature>
<feature type="binding site" evidence="1">
    <location>
        <position position="493"/>
    </location>
    <ligand>
        <name>Mg(2+)</name>
        <dbReference type="ChEBI" id="CHEBI:18420"/>
    </ligand>
</feature>
<comment type="function">
    <text evidence="1">Involved in mRNA degradation. Catalyzes the phosphorolysis of single-stranded polyribonucleotides processively in the 3'- to 5'-direction.</text>
</comment>
<comment type="catalytic activity">
    <reaction evidence="1">
        <text>RNA(n+1) + phosphate = RNA(n) + a ribonucleoside 5'-diphosphate</text>
        <dbReference type="Rhea" id="RHEA:22096"/>
        <dbReference type="Rhea" id="RHEA-COMP:14527"/>
        <dbReference type="Rhea" id="RHEA-COMP:17342"/>
        <dbReference type="ChEBI" id="CHEBI:43474"/>
        <dbReference type="ChEBI" id="CHEBI:57930"/>
        <dbReference type="ChEBI" id="CHEBI:140395"/>
        <dbReference type="EC" id="2.7.7.8"/>
    </reaction>
</comment>
<comment type="cofactor">
    <cofactor evidence="1">
        <name>Mg(2+)</name>
        <dbReference type="ChEBI" id="CHEBI:18420"/>
    </cofactor>
</comment>
<comment type="subcellular location">
    <subcellularLocation>
        <location evidence="1">Cytoplasm</location>
    </subcellularLocation>
</comment>
<comment type="similarity">
    <text evidence="1">Belongs to the polyribonucleotide nucleotidyltransferase family.</text>
</comment>
<sequence>MGQEKHVFTIDWAGRQLTVEAGQLAKQANGAVMVRYGDTAVLSTATASKEPKPLDFFPLTVNYEERLYAVGKIPGGFIKREGRPSEKAVLASRLIDRPIRPLFADGFRNEVQVISIVMSVDQDCSSEMAAMFGSSLALCVSDIPFEGPIAGVTVGRIDGKFVINPTVDQLEKSDINLIVAGTKDAINMVEAGADEVPEEIMLEAIMFGHEEIKRLIAFQEEIVAAVGKEKTEIELYEIDEELSEKVKSLAEPDLLSAIQVHEKHAREDAINEVKNAVVAKFEEEEHDEDTIKKVKQTLSKLVKNEVRRLITEEKVRPDGRGVDQIRPLSSEVGLLPRTHGSGLFTRGQTQALSVCTLGALGDVQILDGLGVEESKRFMHHYNFPQFSVGETGPMRGPGRREIGHGALGERALEPVIPNEKDFPYTVRLVSEVLESNGSTSQASICASTLAMMDAGVPIKAPVAGIAMGLVKSGEYYTVLTDIQGMEDALGDMDFKVAGTEKGVTALQMDIKIEGLSREILEEALQQAKKGRMEILNSMLSTLGESRKELSQYAPKILTMNINPDKIRDVIGPSGKQINKIIEDTGVKIDIEQDGTIFISSTDESSNQKAKKIIEDLVREVEVGQLYLGKVKRIEKFGAFVEIFSGKDGLVHISELALERVGKVEDVVKIGDEILVKVTEIDKQGRVNLSRKAVLREEKEKEQEQQQS</sequence>
<accession>A7Z4U0</accession>
<dbReference type="EC" id="2.7.7.8" evidence="1"/>
<dbReference type="EMBL" id="CP000560">
    <property type="protein sequence ID" value="ABS74016.1"/>
    <property type="molecule type" value="Genomic_DNA"/>
</dbReference>
<dbReference type="RefSeq" id="WP_007611468.1">
    <property type="nucleotide sequence ID" value="NC_009725.2"/>
</dbReference>
<dbReference type="SMR" id="A7Z4U0"/>
<dbReference type="GeneID" id="93080786"/>
<dbReference type="KEGG" id="bay:RBAM_016530"/>
<dbReference type="HOGENOM" id="CLU_004217_2_2_9"/>
<dbReference type="Proteomes" id="UP000001120">
    <property type="component" value="Chromosome"/>
</dbReference>
<dbReference type="GO" id="GO:0005829">
    <property type="term" value="C:cytosol"/>
    <property type="evidence" value="ECO:0007669"/>
    <property type="project" value="TreeGrafter"/>
</dbReference>
<dbReference type="GO" id="GO:0000175">
    <property type="term" value="F:3'-5'-RNA exonuclease activity"/>
    <property type="evidence" value="ECO:0007669"/>
    <property type="project" value="TreeGrafter"/>
</dbReference>
<dbReference type="GO" id="GO:0000287">
    <property type="term" value="F:magnesium ion binding"/>
    <property type="evidence" value="ECO:0007669"/>
    <property type="project" value="UniProtKB-UniRule"/>
</dbReference>
<dbReference type="GO" id="GO:0004654">
    <property type="term" value="F:polyribonucleotide nucleotidyltransferase activity"/>
    <property type="evidence" value="ECO:0007669"/>
    <property type="project" value="UniProtKB-UniRule"/>
</dbReference>
<dbReference type="GO" id="GO:0003723">
    <property type="term" value="F:RNA binding"/>
    <property type="evidence" value="ECO:0007669"/>
    <property type="project" value="UniProtKB-UniRule"/>
</dbReference>
<dbReference type="GO" id="GO:0006402">
    <property type="term" value="P:mRNA catabolic process"/>
    <property type="evidence" value="ECO:0007669"/>
    <property type="project" value="UniProtKB-UniRule"/>
</dbReference>
<dbReference type="GO" id="GO:0006396">
    <property type="term" value="P:RNA processing"/>
    <property type="evidence" value="ECO:0007669"/>
    <property type="project" value="InterPro"/>
</dbReference>
<dbReference type="CDD" id="cd02393">
    <property type="entry name" value="KH-I_PNPase"/>
    <property type="match status" value="1"/>
</dbReference>
<dbReference type="CDD" id="cd11363">
    <property type="entry name" value="RNase_PH_PNPase_1"/>
    <property type="match status" value="1"/>
</dbReference>
<dbReference type="CDD" id="cd11364">
    <property type="entry name" value="RNase_PH_PNPase_2"/>
    <property type="match status" value="1"/>
</dbReference>
<dbReference type="CDD" id="cd04472">
    <property type="entry name" value="S1_PNPase"/>
    <property type="match status" value="1"/>
</dbReference>
<dbReference type="FunFam" id="2.40.50.140:FF:000023">
    <property type="entry name" value="Polyribonucleotide nucleotidyltransferase"/>
    <property type="match status" value="1"/>
</dbReference>
<dbReference type="FunFam" id="3.30.1370.10:FF:000001">
    <property type="entry name" value="Polyribonucleotide nucleotidyltransferase"/>
    <property type="match status" value="1"/>
</dbReference>
<dbReference type="FunFam" id="3.30.230.70:FF:000001">
    <property type="entry name" value="Polyribonucleotide nucleotidyltransferase"/>
    <property type="match status" value="1"/>
</dbReference>
<dbReference type="FunFam" id="3.30.230.70:FF:000002">
    <property type="entry name" value="Polyribonucleotide nucleotidyltransferase"/>
    <property type="match status" value="1"/>
</dbReference>
<dbReference type="Gene3D" id="3.30.230.70">
    <property type="entry name" value="GHMP Kinase, N-terminal domain"/>
    <property type="match status" value="2"/>
</dbReference>
<dbReference type="Gene3D" id="3.30.1370.10">
    <property type="entry name" value="K Homology domain, type 1"/>
    <property type="match status" value="1"/>
</dbReference>
<dbReference type="Gene3D" id="2.40.50.140">
    <property type="entry name" value="Nucleic acid-binding proteins"/>
    <property type="match status" value="1"/>
</dbReference>
<dbReference type="HAMAP" id="MF_01595">
    <property type="entry name" value="PNPase"/>
    <property type="match status" value="1"/>
</dbReference>
<dbReference type="InterPro" id="IPR001247">
    <property type="entry name" value="ExoRNase_PH_dom1"/>
</dbReference>
<dbReference type="InterPro" id="IPR015847">
    <property type="entry name" value="ExoRNase_PH_dom2"/>
</dbReference>
<dbReference type="InterPro" id="IPR036345">
    <property type="entry name" value="ExoRNase_PH_dom2_sf"/>
</dbReference>
<dbReference type="InterPro" id="IPR004087">
    <property type="entry name" value="KH_dom"/>
</dbReference>
<dbReference type="InterPro" id="IPR004088">
    <property type="entry name" value="KH_dom_type_1"/>
</dbReference>
<dbReference type="InterPro" id="IPR036612">
    <property type="entry name" value="KH_dom_type_1_sf"/>
</dbReference>
<dbReference type="InterPro" id="IPR012340">
    <property type="entry name" value="NA-bd_OB-fold"/>
</dbReference>
<dbReference type="InterPro" id="IPR012162">
    <property type="entry name" value="PNPase"/>
</dbReference>
<dbReference type="InterPro" id="IPR027408">
    <property type="entry name" value="PNPase/RNase_PH_dom_sf"/>
</dbReference>
<dbReference type="InterPro" id="IPR015848">
    <property type="entry name" value="PNPase_PH_RNA-bd_bac/org-type"/>
</dbReference>
<dbReference type="InterPro" id="IPR020568">
    <property type="entry name" value="Ribosomal_Su5_D2-typ_SF"/>
</dbReference>
<dbReference type="InterPro" id="IPR003029">
    <property type="entry name" value="S1_domain"/>
</dbReference>
<dbReference type="NCBIfam" id="TIGR03591">
    <property type="entry name" value="polynuc_phos"/>
    <property type="match status" value="1"/>
</dbReference>
<dbReference type="NCBIfam" id="NF008805">
    <property type="entry name" value="PRK11824.1"/>
    <property type="match status" value="1"/>
</dbReference>
<dbReference type="PANTHER" id="PTHR11252">
    <property type="entry name" value="POLYRIBONUCLEOTIDE NUCLEOTIDYLTRANSFERASE"/>
    <property type="match status" value="1"/>
</dbReference>
<dbReference type="PANTHER" id="PTHR11252:SF0">
    <property type="entry name" value="POLYRIBONUCLEOTIDE NUCLEOTIDYLTRANSFERASE 1, MITOCHONDRIAL"/>
    <property type="match status" value="1"/>
</dbReference>
<dbReference type="Pfam" id="PF00013">
    <property type="entry name" value="KH_1"/>
    <property type="match status" value="1"/>
</dbReference>
<dbReference type="Pfam" id="PF03726">
    <property type="entry name" value="PNPase"/>
    <property type="match status" value="1"/>
</dbReference>
<dbReference type="Pfam" id="PF01138">
    <property type="entry name" value="RNase_PH"/>
    <property type="match status" value="2"/>
</dbReference>
<dbReference type="Pfam" id="PF03725">
    <property type="entry name" value="RNase_PH_C"/>
    <property type="match status" value="2"/>
</dbReference>
<dbReference type="Pfam" id="PF00575">
    <property type="entry name" value="S1"/>
    <property type="match status" value="1"/>
</dbReference>
<dbReference type="PIRSF" id="PIRSF005499">
    <property type="entry name" value="PNPase"/>
    <property type="match status" value="1"/>
</dbReference>
<dbReference type="SMART" id="SM00322">
    <property type="entry name" value="KH"/>
    <property type="match status" value="1"/>
</dbReference>
<dbReference type="SMART" id="SM00316">
    <property type="entry name" value="S1"/>
    <property type="match status" value="1"/>
</dbReference>
<dbReference type="SUPFAM" id="SSF54791">
    <property type="entry name" value="Eukaryotic type KH-domain (KH-domain type I)"/>
    <property type="match status" value="1"/>
</dbReference>
<dbReference type="SUPFAM" id="SSF50249">
    <property type="entry name" value="Nucleic acid-binding proteins"/>
    <property type="match status" value="1"/>
</dbReference>
<dbReference type="SUPFAM" id="SSF55666">
    <property type="entry name" value="Ribonuclease PH domain 2-like"/>
    <property type="match status" value="2"/>
</dbReference>
<dbReference type="SUPFAM" id="SSF54211">
    <property type="entry name" value="Ribosomal protein S5 domain 2-like"/>
    <property type="match status" value="2"/>
</dbReference>
<dbReference type="PROSITE" id="PS50084">
    <property type="entry name" value="KH_TYPE_1"/>
    <property type="match status" value="1"/>
</dbReference>
<dbReference type="PROSITE" id="PS50126">
    <property type="entry name" value="S1"/>
    <property type="match status" value="1"/>
</dbReference>
<protein>
    <recommendedName>
        <fullName evidence="1">Polyribonucleotide nucleotidyltransferase</fullName>
        <ecNumber evidence="1">2.7.7.8</ecNumber>
    </recommendedName>
    <alternativeName>
        <fullName evidence="1">Polynucleotide phosphorylase</fullName>
        <shortName evidence="1">PNPase</shortName>
    </alternativeName>
</protein>
<organism>
    <name type="scientific">Bacillus velezensis (strain DSM 23117 / BGSC 10A6 / LMG 26770 / FZB42)</name>
    <name type="common">Bacillus amyloliquefaciens subsp. plantarum</name>
    <dbReference type="NCBI Taxonomy" id="326423"/>
    <lineage>
        <taxon>Bacteria</taxon>
        <taxon>Bacillati</taxon>
        <taxon>Bacillota</taxon>
        <taxon>Bacilli</taxon>
        <taxon>Bacillales</taxon>
        <taxon>Bacillaceae</taxon>
        <taxon>Bacillus</taxon>
        <taxon>Bacillus amyloliquefaciens group</taxon>
    </lineage>
</organism>
<name>PNP_BACVZ</name>
<reference key="1">
    <citation type="journal article" date="2007" name="Nat. Biotechnol.">
        <title>Comparative analysis of the complete genome sequence of the plant growth-promoting bacterium Bacillus amyloliquefaciens FZB42.</title>
        <authorList>
            <person name="Chen X.H."/>
            <person name="Koumoutsi A."/>
            <person name="Scholz R."/>
            <person name="Eisenreich A."/>
            <person name="Schneider K."/>
            <person name="Heinemeyer I."/>
            <person name="Morgenstern B."/>
            <person name="Voss B."/>
            <person name="Hess W.R."/>
            <person name="Reva O."/>
            <person name="Junge H."/>
            <person name="Voigt B."/>
            <person name="Jungblut P.R."/>
            <person name="Vater J."/>
            <person name="Suessmuth R."/>
            <person name="Liesegang H."/>
            <person name="Strittmatter A."/>
            <person name="Gottschalk G."/>
            <person name="Borriss R."/>
        </authorList>
    </citation>
    <scope>NUCLEOTIDE SEQUENCE [LARGE SCALE GENOMIC DNA]</scope>
    <source>
        <strain>DSM 23117 / BGSC 10A6 / LMG 26770 / FZB42</strain>
    </source>
</reference>
<proteinExistence type="inferred from homology"/>